<protein>
    <recommendedName>
        <fullName evidence="1">Cytochrome c-type biogenesis protein CcmE</fullName>
    </recommendedName>
    <alternativeName>
        <fullName evidence="1">Cytochrome c maturation protein E</fullName>
    </alternativeName>
    <alternativeName>
        <fullName evidence="1">Heme chaperone CcmE</fullName>
    </alternativeName>
</protein>
<sequence length="155" mass="16443">MNPLRKKRLLIIAALLAGVGLAMTLALGALKENINLFYTPSQIANGEAPLDTRIRAGGMVEKGSLQRSADSLDVRFVVTDFNKSVTITYRGILPDLFREGQGIVALGKLNAQGVVVADEVLAKHDEKYMPPEVTKALRDSGQAAPGGSSTPAKQG</sequence>
<evidence type="ECO:0000255" key="1">
    <source>
        <dbReference type="HAMAP-Rule" id="MF_01959"/>
    </source>
</evidence>
<evidence type="ECO:0000256" key="2">
    <source>
        <dbReference type="SAM" id="MobiDB-lite"/>
    </source>
</evidence>
<organism>
    <name type="scientific">Pseudomonas savastanoi pv. phaseolicola (strain 1448A / Race 6)</name>
    <name type="common">Pseudomonas syringae pv. phaseolicola (strain 1448A / Race 6)</name>
    <dbReference type="NCBI Taxonomy" id="264730"/>
    <lineage>
        <taxon>Bacteria</taxon>
        <taxon>Pseudomonadati</taxon>
        <taxon>Pseudomonadota</taxon>
        <taxon>Gammaproteobacteria</taxon>
        <taxon>Pseudomonadales</taxon>
        <taxon>Pseudomonadaceae</taxon>
        <taxon>Pseudomonas</taxon>
    </lineage>
</organism>
<gene>
    <name evidence="1" type="primary">ccmE</name>
    <name evidence="1" type="synonym">cycJ</name>
    <name type="ordered locus">PSPPH_3310</name>
</gene>
<reference key="1">
    <citation type="journal article" date="2005" name="J. Bacteriol.">
        <title>Whole-genome sequence analysis of Pseudomonas syringae pv. phaseolicola 1448A reveals divergence among pathovars in genes involved in virulence and transposition.</title>
        <authorList>
            <person name="Joardar V."/>
            <person name="Lindeberg M."/>
            <person name="Jackson R.W."/>
            <person name="Selengut J."/>
            <person name="Dodson R."/>
            <person name="Brinkac L.M."/>
            <person name="Daugherty S.C."/>
            <person name="DeBoy R.T."/>
            <person name="Durkin A.S."/>
            <person name="Gwinn Giglio M."/>
            <person name="Madupu R."/>
            <person name="Nelson W.C."/>
            <person name="Rosovitz M.J."/>
            <person name="Sullivan S.A."/>
            <person name="Crabtree J."/>
            <person name="Creasy T."/>
            <person name="Davidsen T.M."/>
            <person name="Haft D.H."/>
            <person name="Zafar N."/>
            <person name="Zhou L."/>
            <person name="Halpin R."/>
            <person name="Holley T."/>
            <person name="Khouri H.M."/>
            <person name="Feldblyum T.V."/>
            <person name="White O."/>
            <person name="Fraser C.M."/>
            <person name="Chatterjee A.K."/>
            <person name="Cartinhour S."/>
            <person name="Schneider D."/>
            <person name="Mansfield J.W."/>
            <person name="Collmer A."/>
            <person name="Buell R."/>
        </authorList>
    </citation>
    <scope>NUCLEOTIDE SEQUENCE [LARGE SCALE GENOMIC DNA]</scope>
    <source>
        <strain>1448A / Race 6</strain>
    </source>
</reference>
<comment type="function">
    <text evidence="1">Heme chaperone required for the biogenesis of c-type cytochromes. Transiently binds heme delivered by CcmC and transfers the heme to apo-cytochromes in a process facilitated by CcmF and CcmH.</text>
</comment>
<comment type="subcellular location">
    <subcellularLocation>
        <location evidence="1">Cell inner membrane</location>
        <topology evidence="1">Single-pass type II membrane protein</topology>
        <orientation evidence="1">Periplasmic side</orientation>
    </subcellularLocation>
</comment>
<comment type="similarity">
    <text evidence="1">Belongs to the CcmE/CycJ family.</text>
</comment>
<keyword id="KW-0997">Cell inner membrane</keyword>
<keyword id="KW-1003">Cell membrane</keyword>
<keyword id="KW-0201">Cytochrome c-type biogenesis</keyword>
<keyword id="KW-0349">Heme</keyword>
<keyword id="KW-0408">Iron</keyword>
<keyword id="KW-0472">Membrane</keyword>
<keyword id="KW-0479">Metal-binding</keyword>
<keyword id="KW-0735">Signal-anchor</keyword>
<keyword id="KW-0812">Transmembrane</keyword>
<keyword id="KW-1133">Transmembrane helix</keyword>
<dbReference type="EMBL" id="CP000058">
    <property type="protein sequence ID" value="AAZ34862.1"/>
    <property type="molecule type" value="Genomic_DNA"/>
</dbReference>
<dbReference type="RefSeq" id="WP_004665810.1">
    <property type="nucleotide sequence ID" value="NC_005773.3"/>
</dbReference>
<dbReference type="SMR" id="Q48GL4"/>
<dbReference type="KEGG" id="psp:PSPPH_3310"/>
<dbReference type="eggNOG" id="COG2332">
    <property type="taxonomic scope" value="Bacteria"/>
</dbReference>
<dbReference type="HOGENOM" id="CLU_079503_1_1_6"/>
<dbReference type="Proteomes" id="UP000000551">
    <property type="component" value="Chromosome"/>
</dbReference>
<dbReference type="GO" id="GO:0005886">
    <property type="term" value="C:plasma membrane"/>
    <property type="evidence" value="ECO:0007669"/>
    <property type="project" value="UniProtKB-SubCell"/>
</dbReference>
<dbReference type="GO" id="GO:0020037">
    <property type="term" value="F:heme binding"/>
    <property type="evidence" value="ECO:0007669"/>
    <property type="project" value="InterPro"/>
</dbReference>
<dbReference type="GO" id="GO:0046872">
    <property type="term" value="F:metal ion binding"/>
    <property type="evidence" value="ECO:0007669"/>
    <property type="project" value="UniProtKB-KW"/>
</dbReference>
<dbReference type="GO" id="GO:0017004">
    <property type="term" value="P:cytochrome complex assembly"/>
    <property type="evidence" value="ECO:0007669"/>
    <property type="project" value="UniProtKB-KW"/>
</dbReference>
<dbReference type="FunFam" id="2.40.50.140:FF:000104">
    <property type="entry name" value="Cytochrome c-type biogenesis protein CcmE"/>
    <property type="match status" value="1"/>
</dbReference>
<dbReference type="Gene3D" id="2.40.50.140">
    <property type="entry name" value="Nucleic acid-binding proteins"/>
    <property type="match status" value="1"/>
</dbReference>
<dbReference type="HAMAP" id="MF_01959">
    <property type="entry name" value="CcmE"/>
    <property type="match status" value="1"/>
</dbReference>
<dbReference type="InterPro" id="IPR004329">
    <property type="entry name" value="CcmE"/>
</dbReference>
<dbReference type="InterPro" id="IPR036127">
    <property type="entry name" value="CcmE-like_sf"/>
</dbReference>
<dbReference type="InterPro" id="IPR012340">
    <property type="entry name" value="NA-bd_OB-fold"/>
</dbReference>
<dbReference type="NCBIfam" id="NF009727">
    <property type="entry name" value="PRK13254.1-1"/>
    <property type="match status" value="1"/>
</dbReference>
<dbReference type="NCBIfam" id="NF009729">
    <property type="entry name" value="PRK13254.1-3"/>
    <property type="match status" value="1"/>
</dbReference>
<dbReference type="NCBIfam" id="NF009731">
    <property type="entry name" value="PRK13254.1-5"/>
    <property type="match status" value="1"/>
</dbReference>
<dbReference type="PANTHER" id="PTHR34128">
    <property type="entry name" value="CYTOCHROME C-TYPE BIOGENESIS PROTEIN CCME HOMOLOG, MITOCHONDRIAL"/>
    <property type="match status" value="1"/>
</dbReference>
<dbReference type="PANTHER" id="PTHR34128:SF2">
    <property type="entry name" value="CYTOCHROME C-TYPE BIOGENESIS PROTEIN CCME HOMOLOG, MITOCHONDRIAL"/>
    <property type="match status" value="1"/>
</dbReference>
<dbReference type="Pfam" id="PF03100">
    <property type="entry name" value="CcmE"/>
    <property type="match status" value="1"/>
</dbReference>
<dbReference type="SUPFAM" id="SSF82093">
    <property type="entry name" value="Heme chaperone CcmE"/>
    <property type="match status" value="1"/>
</dbReference>
<name>CCME_PSE14</name>
<accession>Q48GL4</accession>
<proteinExistence type="inferred from homology"/>
<feature type="chain" id="PRO_0000238841" description="Cytochrome c-type biogenesis protein CcmE">
    <location>
        <begin position="1"/>
        <end position="155"/>
    </location>
</feature>
<feature type="topological domain" description="Cytoplasmic" evidence="1">
    <location>
        <begin position="1"/>
        <end position="8"/>
    </location>
</feature>
<feature type="transmembrane region" description="Helical; Signal-anchor for type II membrane protein" evidence="1">
    <location>
        <begin position="9"/>
        <end position="29"/>
    </location>
</feature>
<feature type="topological domain" description="Periplasmic" evidence="1">
    <location>
        <begin position="30"/>
        <end position="155"/>
    </location>
</feature>
<feature type="region of interest" description="Disordered" evidence="2">
    <location>
        <begin position="134"/>
        <end position="155"/>
    </location>
</feature>
<feature type="binding site" description="covalent" evidence="1">
    <location>
        <position position="124"/>
    </location>
    <ligand>
        <name>heme</name>
        <dbReference type="ChEBI" id="CHEBI:30413"/>
    </ligand>
</feature>
<feature type="binding site" description="axial binding residue" evidence="1">
    <location>
        <position position="128"/>
    </location>
    <ligand>
        <name>heme</name>
        <dbReference type="ChEBI" id="CHEBI:30413"/>
    </ligand>
    <ligandPart>
        <name>Fe</name>
        <dbReference type="ChEBI" id="CHEBI:18248"/>
    </ligandPart>
</feature>